<feature type="chain" id="PRO_0000436475" description="Tektin-5">
    <location>
        <begin position="1"/>
        <end position="557"/>
    </location>
</feature>
<feature type="repeat" description="1" evidence="10">
    <location>
        <begin position="507"/>
        <end position="512"/>
    </location>
</feature>
<feature type="repeat" description="2" evidence="10">
    <location>
        <begin position="513"/>
        <end position="518"/>
    </location>
</feature>
<feature type="repeat" description="3" evidence="10">
    <location>
        <begin position="519"/>
        <end position="524"/>
    </location>
</feature>
<feature type="repeat" description="4" evidence="10">
    <location>
        <begin position="525"/>
        <end position="530"/>
    </location>
</feature>
<feature type="repeat" description="5" evidence="10">
    <location>
        <begin position="531"/>
        <end position="536"/>
    </location>
</feature>
<feature type="repeat" description="6" evidence="10">
    <location>
        <begin position="537"/>
        <end position="541"/>
    </location>
</feature>
<feature type="region of interest" description="6 X 6 AA approximate tandem repeats of C-[GSK]-G-[GSPH]-A-[SLP]" evidence="10">
    <location>
        <begin position="507"/>
        <end position="541"/>
    </location>
</feature>
<feature type="coiled-coil region" evidence="2">
    <location>
        <begin position="302"/>
        <end position="386"/>
    </location>
</feature>
<feature type="splice variant" id="VSP_058377" description="In isoform 2.">
    <location>
        <begin position="416"/>
        <end position="557"/>
    </location>
</feature>
<comment type="function">
    <text evidence="3 6 7 8">Sperm-specific microtubule inner protein (MIP) part of the dynein-decorated doublet microtubules (DMTs) in flagellar axoneme (PubMed:20378928, PubMed:37295417, PubMed:37865089, PubMed:37989994). Forms an extensive interaction network in different conformations that reinforces the helix bundle composed by other tektin proteins (TEKT1 to TEKT4) and MIPs to anchor the tektin bundle onto the tubulin wall of A-tubule of the sperm flagellum (PubMed:37295417, PubMed:37865089).</text>
</comment>
<comment type="subunit">
    <text evidence="1 6 7 8">Microtubule inner protein component of sperm flagellar doublet microtubules (PubMed:37295417, PubMed:37865089, PubMed:37989994). Interacts with TEKT3 (By similarity).</text>
</comment>
<comment type="subcellular location">
    <subcellularLocation>
        <location evidence="6 7 8 11">Cytoplasm</location>
        <location evidence="6 7 8 11">Cytoskeleton</location>
        <location evidence="6 7 8 11">Flagellum axoneme</location>
    </subcellularLocation>
</comment>
<comment type="alternative products">
    <event type="alternative splicing"/>
    <isoform>
        <id>G5E8A8-1</id>
        <name>1</name>
        <sequence type="displayed"/>
    </isoform>
    <isoform>
        <id>G5E8A8-2</id>
        <name>2</name>
        <sequence type="described" ref="VSP_058377"/>
    </isoform>
</comment>
<comment type="tissue specificity">
    <text evidence="3 5">Strongly expressed in germ cells of the testis (at protein level) (PubMed:20378928). Expressed in spermatozoa (PubMed:36708031). Also detected in brain (PubMed:20378928).</text>
</comment>
<comment type="developmental stage">
    <text evidence="3">In germ cells, has highest expression levels during late spermiogenesis (in round spermatids and condensing spermatids).</text>
</comment>
<comment type="PTM">
    <text evidence="4">Ubiquitinated, leading to its degradation. Deubiquitinated by USP16, promoting its stability.</text>
</comment>
<comment type="disruption phenotype">
    <text evidence="7">Male mice are fertile but show lower fraction of motile sperm cells due to a significant proportion of cells with deformed flagella.</text>
</comment>
<comment type="similarity">
    <text evidence="10">Belongs to the tektin family.</text>
</comment>
<evidence type="ECO:0000250" key="1">
    <source>
        <dbReference type="UniProtKB" id="Q96M29"/>
    </source>
</evidence>
<evidence type="ECO:0000255" key="2"/>
<evidence type="ECO:0000269" key="3">
    <source>
    </source>
</evidence>
<evidence type="ECO:0000269" key="4">
    <source>
    </source>
</evidence>
<evidence type="ECO:0000269" key="5">
    <source>
    </source>
</evidence>
<evidence type="ECO:0000269" key="6">
    <source>
    </source>
</evidence>
<evidence type="ECO:0000269" key="7">
    <source>
    </source>
</evidence>
<evidence type="ECO:0000269" key="8">
    <source>
    </source>
</evidence>
<evidence type="ECO:0000303" key="9">
    <source>
    </source>
</evidence>
<evidence type="ECO:0000305" key="10"/>
<evidence type="ECO:0000305" key="11">
    <source>
    </source>
</evidence>
<evidence type="ECO:0000312" key="12">
    <source>
        <dbReference type="EMBL" id="AAI15970.1"/>
    </source>
</evidence>
<evidence type="ECO:0000312" key="13">
    <source>
        <dbReference type="EMBL" id="ADD80740.1"/>
    </source>
</evidence>
<evidence type="ECO:0000312" key="14">
    <source>
        <dbReference type="EMBL" id="EDK97311.1"/>
    </source>
</evidence>
<evidence type="ECO:0000312" key="15">
    <source>
        <dbReference type="Proteomes" id="UP000000589"/>
    </source>
</evidence>
<evidence type="ECO:0007744" key="16">
    <source>
        <dbReference type="PDB" id="8I7O"/>
    </source>
</evidence>
<evidence type="ECO:0007744" key="17">
    <source>
        <dbReference type="PDB" id="8I7R"/>
    </source>
</evidence>
<evidence type="ECO:0007744" key="18">
    <source>
        <dbReference type="PDB" id="8IYJ"/>
    </source>
</evidence>
<evidence type="ECO:0007744" key="19">
    <source>
        <dbReference type="PDB" id="8TO0"/>
    </source>
</evidence>
<sequence length="557" mass="62734">MEFLGTTQTASFCGPKKGCGLQALPPAGQEPVVQECYQPFHLPGYRYLNAWRPSVFHKIATSQTIPEECSGIRRPPTILPSLRSALFCRYTPRDWDRSNDLQIRNAEASRLWASRLTGDSLRIMQDKDQLIHQMQEGTSRNLGQRLSDLGFWKSELCYELDRLLTENSSMDTLKRRLECAAEEVNCPLQVALECLYNREKRIGIDLVHDNVEKNLIREVDLLKCCQDQMRKLAKRIDFQIRDNRDAQHSLERDIEDKSSAQYIDENCFNLRSTSDSISFFHGVEKFDGTVSIPETWAKFSNDNIRHAQNMRANSIRLREEAEHLFETLSDQMWKQFTNTNLAFNARISEETDVKNKLQTQLAKILQEIFQAENTIMLLERAIVAKEYPLKMAQTMLACRTRRPNVELCRDVPQFRLVNEVFTIDDTLQTLKLRLRETQDTLQLLVMTKSRLEHELAIKANTLCIDKDKCMSMRKSFPSTPRLTGYTCSAIGSGPYANHAPRISSGPCSGSALCKGPASCGGGASCGGGASCGGHAPCGSALCSHSVSRSGPGFAPVC</sequence>
<accession>G5E8A8</accession>
<accession>D5HP88</accession>
<accession>Q14BE9</accession>
<keyword id="KW-0002">3D-structure</keyword>
<keyword id="KW-0025">Alternative splicing</keyword>
<keyword id="KW-0966">Cell projection</keyword>
<keyword id="KW-0969">Cilium</keyword>
<keyword id="KW-0175">Coiled coil</keyword>
<keyword id="KW-0963">Cytoplasm</keyword>
<keyword id="KW-0206">Cytoskeleton</keyword>
<keyword id="KW-0282">Flagellum</keyword>
<keyword id="KW-1185">Reference proteome</keyword>
<keyword id="KW-0677">Repeat</keyword>
<keyword id="KW-0832">Ubl conjugation</keyword>
<organism evidence="15">
    <name type="scientific">Mus musculus</name>
    <name type="common">Mouse</name>
    <dbReference type="NCBI Taxonomy" id="10090"/>
    <lineage>
        <taxon>Eukaryota</taxon>
        <taxon>Metazoa</taxon>
        <taxon>Chordata</taxon>
        <taxon>Craniata</taxon>
        <taxon>Vertebrata</taxon>
        <taxon>Euteleostomi</taxon>
        <taxon>Mammalia</taxon>
        <taxon>Eutheria</taxon>
        <taxon>Euarchontoglires</taxon>
        <taxon>Glires</taxon>
        <taxon>Rodentia</taxon>
        <taxon>Myomorpha</taxon>
        <taxon>Muroidea</taxon>
        <taxon>Muridae</taxon>
        <taxon>Murinae</taxon>
        <taxon>Mus</taxon>
        <taxon>Mus</taxon>
    </lineage>
</organism>
<name>TEKT5_MOUSE</name>
<reference evidence="13" key="1">
    <citation type="journal article" date="2011" name="J. Androl.">
        <title>Characterization of a novel tektin member, TEKT5, in mouse sperm.</title>
        <authorList>
            <person name="Cao W."/>
            <person name="Ijiri T.W."/>
            <person name="Huang A.P."/>
            <person name="Gerton G.L."/>
        </authorList>
    </citation>
    <scope>NUCLEOTIDE SEQUENCE [MRNA] (ISOFORM 1)</scope>
    <scope>SUBCELLULAR LOCATION</scope>
    <scope>TISSUE SPECIFICITY</scope>
    <scope>DEVELOPMENTAL STAGE</scope>
    <scope>IDENTIFICATION BY MASS SPECTROMETRY</scope>
    <source>
        <strain evidence="13">CD-1</strain>
    </source>
</reference>
<reference evidence="15" key="2">
    <citation type="journal article" date="2009" name="PLoS Biol.">
        <title>Lineage-specific biology revealed by a finished genome assembly of the mouse.</title>
        <authorList>
            <person name="Church D.M."/>
            <person name="Goodstadt L."/>
            <person name="Hillier L.W."/>
            <person name="Zody M.C."/>
            <person name="Goldstein S."/>
            <person name="She X."/>
            <person name="Bult C.J."/>
            <person name="Agarwala R."/>
            <person name="Cherry J.L."/>
            <person name="DiCuccio M."/>
            <person name="Hlavina W."/>
            <person name="Kapustin Y."/>
            <person name="Meric P."/>
            <person name="Maglott D."/>
            <person name="Birtle Z."/>
            <person name="Marques A.C."/>
            <person name="Graves T."/>
            <person name="Zhou S."/>
            <person name="Teague B."/>
            <person name="Potamousis K."/>
            <person name="Churas C."/>
            <person name="Place M."/>
            <person name="Herschleb J."/>
            <person name="Runnheim R."/>
            <person name="Forrest D."/>
            <person name="Amos-Landgraf J."/>
            <person name="Schwartz D.C."/>
            <person name="Cheng Z."/>
            <person name="Lindblad-Toh K."/>
            <person name="Eichler E.E."/>
            <person name="Ponting C.P."/>
        </authorList>
    </citation>
    <scope>NUCLEOTIDE SEQUENCE [LARGE SCALE GENOMIC DNA]</scope>
    <source>
        <strain evidence="15">C57BL/6J</strain>
    </source>
</reference>
<reference evidence="14" key="3">
    <citation type="submission" date="2005-07" db="EMBL/GenBank/DDBJ databases">
        <authorList>
            <person name="Mural R.J."/>
            <person name="Adams M.D."/>
            <person name="Myers E.W."/>
            <person name="Smith H.O."/>
            <person name="Venter J.C."/>
        </authorList>
    </citation>
    <scope>NUCLEOTIDE SEQUENCE [LARGE SCALE GENOMIC DNA]</scope>
</reference>
<reference evidence="12" key="4">
    <citation type="journal article" date="2004" name="Genome Res.">
        <title>The status, quality, and expansion of the NIH full-length cDNA project: the Mammalian Gene Collection (MGC).</title>
        <authorList>
            <consortium name="The MGC Project Team"/>
        </authorList>
    </citation>
    <scope>NUCLEOTIDE SEQUENCE [LARGE SCALE MRNA] (ISOFORM 2)</scope>
    <source>
        <strain evidence="12">C57BL/6J</strain>
    </source>
</reference>
<reference key="5">
    <citation type="journal article" date="2023" name="Hum. Mol. Genet.">
        <title>Bi-allelic human TEKT3 mutations cause male infertility with oligoasthenoteratozoospermia due to acrosomal hypoplasia and reduced progressive motility.</title>
        <authorList>
            <person name="Liu Y."/>
            <person name="Li Y."/>
            <person name="Meng L."/>
            <person name="Li K."/>
            <person name="Gao Y."/>
            <person name="Lv M."/>
            <person name="Guo R."/>
            <person name="Xu Y."/>
            <person name="Zhou P."/>
            <person name="Wei Z."/>
            <person name="He X."/>
            <person name="Cao Y."/>
            <person name="Wu H."/>
            <person name="Tan Y."/>
            <person name="Hua R."/>
        </authorList>
    </citation>
    <scope>TISSUE SPECIFICITY</scope>
</reference>
<reference key="6">
    <citation type="journal article" date="2022" name="Sci. Adv.">
        <title>Loss-of-function mutations in CEP78 cause male infertility in humans and mice.</title>
        <authorList>
            <person name="Zhang X."/>
            <person name="Zheng R."/>
            <person name="Liang C."/>
            <person name="Liu H."/>
            <person name="Zhang X."/>
            <person name="Ma Y."/>
            <person name="Liu M."/>
            <person name="Zhang W."/>
            <person name="Yang Y."/>
            <person name="Liu M."/>
            <person name="Jiang C."/>
            <person name="Ren Q."/>
            <person name="Wang Y."/>
            <person name="Chen S."/>
            <person name="Yang Y."/>
            <person name="Shen Y."/>
        </authorList>
    </citation>
    <scope>UBIQUITINATION</scope>
    <scope>DEUBIQUITINATION</scope>
</reference>
<reference evidence="18" key="7">
    <citation type="journal article" date="2023" name="Cell">
        <title>Structures of sperm flagellar doublet microtubules expand the genetic spectrum of male infertility.</title>
        <authorList>
            <person name="Zhou L."/>
            <person name="Liu H."/>
            <person name="Liu S."/>
            <person name="Yang X."/>
            <person name="Dong Y."/>
            <person name="Pan Y."/>
            <person name="Xiao Z."/>
            <person name="Zheng B."/>
            <person name="Sun Y."/>
            <person name="Huang P."/>
            <person name="Zhang X."/>
            <person name="Hu J."/>
            <person name="Sun R."/>
            <person name="Feng S."/>
            <person name="Zhu Y."/>
            <person name="Liu M."/>
            <person name="Gui M."/>
            <person name="Wu J."/>
        </authorList>
    </citation>
    <scope>STRUCTURE BY ELECTRON MICROSCOPY (3.50 ANGSTROMS) OF SPERM FLAGELLAR DOUBLET MICROTUBULES</scope>
    <scope>SUBCELLULAR LOCATION</scope>
    <scope>SUBUNIT</scope>
</reference>
<reference evidence="19" key="8">
    <citation type="journal article" date="2023" name="Cell">
        <title>De novo protein identification in mammalian sperm using in situ cryoelectron tomography and AlphaFold2 docking.</title>
        <authorList>
            <person name="Chen Z."/>
            <person name="Shiozaki M."/>
            <person name="Haas K.M."/>
            <person name="Skinner W.M."/>
            <person name="Zhao S."/>
            <person name="Guo C."/>
            <person name="Polacco B.J."/>
            <person name="Yu Z."/>
            <person name="Krogan N.J."/>
            <person name="Lishko P.V."/>
            <person name="Kaake R.M."/>
            <person name="Vale R.D."/>
            <person name="Agard D.A."/>
        </authorList>
    </citation>
    <scope>STRUCTURE BY ELECTRON MICROSCOPY (7.70 ANGSTROMS) OF SPERM FLAGELLAR DOUBLET MICROTUBULES</scope>
    <scope>FUNCTION</scope>
    <scope>SUBCELLULAR LOCATION</scope>
    <scope>SUBUNIT</scope>
    <scope>DISRUPTION PHENOTYPE</scope>
</reference>
<reference evidence="16 17" key="9">
    <citation type="journal article" date="2023" name="Cell Discov.">
        <title>In-cell structural insight into the stability of sperm microtubule doublet.</title>
        <authorList>
            <person name="Tai L."/>
            <person name="Yin G."/>
            <person name="Huang X."/>
            <person name="Sun F."/>
            <person name="Zhu Y."/>
        </authorList>
    </citation>
    <scope>STRUCTURE BY ELECTRON MICROSCOPY (4.50 ANGSTROMS)</scope>
    <scope>FUNCTION</scope>
    <scope>SUBUNIT</scope>
    <scope>SUBCELLULAR LOCATION</scope>
</reference>
<gene>
    <name evidence="9" type="primary">Tekt5</name>
</gene>
<protein>
    <recommendedName>
        <fullName evidence="9">Tektin-5</fullName>
    </recommendedName>
</protein>
<proteinExistence type="evidence at protein level"/>
<dbReference type="EMBL" id="GQ292766">
    <property type="protein sequence ID" value="ADD80740.1"/>
    <property type="molecule type" value="mRNA"/>
</dbReference>
<dbReference type="EMBL" id="AC154311">
    <property type="status" value="NOT_ANNOTATED_CDS"/>
    <property type="molecule type" value="Genomic_DNA"/>
</dbReference>
<dbReference type="EMBL" id="CH466521">
    <property type="protein sequence ID" value="EDK97311.1"/>
    <property type="molecule type" value="Genomic_DNA"/>
</dbReference>
<dbReference type="EMBL" id="BC115969">
    <property type="protein sequence ID" value="AAI15970.1"/>
    <property type="molecule type" value="mRNA"/>
</dbReference>
<dbReference type="CCDS" id="CCDS70683.1">
    <molecule id="G5E8A8-1"/>
</dbReference>
<dbReference type="RefSeq" id="NP_001092745.1">
    <property type="nucleotide sequence ID" value="NM_001099275.1"/>
</dbReference>
<dbReference type="RefSeq" id="NP_001277930.1">
    <molecule id="G5E8A8-1"/>
    <property type="nucleotide sequence ID" value="NM_001291001.2"/>
</dbReference>
<dbReference type="PDB" id="8I7O">
    <property type="method" value="EM"/>
    <property type="resolution" value="4.50 A"/>
    <property type="chains" value="F2/F3/F6/F7/Fa/Fb/Fc/Fl=1-557"/>
</dbReference>
<dbReference type="PDB" id="8I7R">
    <property type="method" value="EM"/>
    <property type="resolution" value="6.50 A"/>
    <property type="chains" value="F1/F2/F3/F4/F5/F6/F7/F8/F9/Fa/Fb/Fc/Fd/Fe/Ff/Fg/Fh/Fi/Fj/Fk/Fl/Fm=1-557"/>
</dbReference>
<dbReference type="PDB" id="8IYJ">
    <property type="method" value="EM"/>
    <property type="resolution" value="3.50 A"/>
    <property type="chains" value="U0/U1/U2/U3/U4/U5/U6/U7/U8/U9/V0/V1/V2/V3/V4/V5/V6/V7/V8/V9/W0/W2/W4/W5/W6/W7=1-557"/>
</dbReference>
<dbReference type="PDB" id="8TO0">
    <property type="method" value="EM"/>
    <property type="resolution" value="7.70 A"/>
    <property type="chains" value="GR/GS/GT/GU/GV/GW/GX/GY/GZ/Ga/Gb/Gc/Gd/Ge/Gf/Gg/Gh/Gi/Gj/z0/z1/z3/z4=1-557"/>
</dbReference>
<dbReference type="PDBsum" id="8I7O"/>
<dbReference type="PDBsum" id="8I7R"/>
<dbReference type="PDBsum" id="8IYJ"/>
<dbReference type="PDBsum" id="8TO0"/>
<dbReference type="EMDB" id="EMD-35229"/>
<dbReference type="EMDB" id="EMD-35230"/>
<dbReference type="EMDB" id="EMD-35823"/>
<dbReference type="EMDB" id="EMD-41431"/>
<dbReference type="SMR" id="G5E8A8"/>
<dbReference type="FunCoup" id="G5E8A8">
    <property type="interactions" value="35"/>
</dbReference>
<dbReference type="IntAct" id="G5E8A8">
    <property type="interactions" value="1"/>
</dbReference>
<dbReference type="MINT" id="G5E8A8"/>
<dbReference type="STRING" id="10090.ENSMUSP00000046824"/>
<dbReference type="PhosphoSitePlus" id="G5E8A8"/>
<dbReference type="SwissPalm" id="G5E8A8"/>
<dbReference type="PaxDb" id="10090-ENSMUSP00000111497"/>
<dbReference type="ProteomicsDB" id="263162">
    <molecule id="G5E8A8-1"/>
</dbReference>
<dbReference type="ProteomicsDB" id="263163">
    <molecule id="G5E8A8-2"/>
</dbReference>
<dbReference type="Antibodypedia" id="52193">
    <property type="antibodies" value="165 antibodies from 24 providers"/>
</dbReference>
<dbReference type="DNASU" id="70426"/>
<dbReference type="Ensembl" id="ENSMUST00000043415.13">
    <molecule id="G5E8A8-1"/>
    <property type="protein sequence ID" value="ENSMUSP00000046824.7"/>
    <property type="gene ID" value="ENSMUSG00000039179.14"/>
</dbReference>
<dbReference type="Ensembl" id="ENSMUST00000115831.2">
    <molecule id="G5E8A8-2"/>
    <property type="protein sequence ID" value="ENSMUSP00000111497.2"/>
    <property type="gene ID" value="ENSMUSG00000039179.14"/>
</dbReference>
<dbReference type="GeneID" id="70426"/>
<dbReference type="KEGG" id="mmu:70426"/>
<dbReference type="UCSC" id="uc007ydl.3">
    <molecule id="G5E8A8-1"/>
    <property type="organism name" value="mouse"/>
</dbReference>
<dbReference type="UCSC" id="uc007ydm.3">
    <property type="organism name" value="mouse"/>
</dbReference>
<dbReference type="AGR" id="MGI:1917676"/>
<dbReference type="CTD" id="146279"/>
<dbReference type="MGI" id="MGI:1917676">
    <property type="gene designation" value="Tekt5"/>
</dbReference>
<dbReference type="VEuPathDB" id="HostDB:ENSMUSG00000039179"/>
<dbReference type="eggNOG" id="KOG2685">
    <property type="taxonomic scope" value="Eukaryota"/>
</dbReference>
<dbReference type="GeneTree" id="ENSGT00950000182894"/>
<dbReference type="HOGENOM" id="CLU_033588_2_0_1"/>
<dbReference type="InParanoid" id="G5E8A8"/>
<dbReference type="OMA" id="QESYQPY"/>
<dbReference type="OrthoDB" id="9886517at2759"/>
<dbReference type="PhylomeDB" id="G5E8A8"/>
<dbReference type="TreeFam" id="TF320754"/>
<dbReference type="BioGRID-ORCS" id="70426">
    <property type="hits" value="2 hits in 80 CRISPR screens"/>
</dbReference>
<dbReference type="ChiTaRS" id="Tekt5">
    <property type="organism name" value="mouse"/>
</dbReference>
<dbReference type="PRO" id="PR:G5E8A8"/>
<dbReference type="Proteomes" id="UP000000589">
    <property type="component" value="Chromosome 16"/>
</dbReference>
<dbReference type="RNAct" id="G5E8A8">
    <property type="molecule type" value="protein"/>
</dbReference>
<dbReference type="Bgee" id="ENSMUSG00000039179">
    <property type="expression patterns" value="Expressed in seminiferous tubule of testis and 42 other cell types or tissues"/>
</dbReference>
<dbReference type="GO" id="GO:0160111">
    <property type="term" value="C:axonemal A tubule inner sheath"/>
    <property type="evidence" value="ECO:0000314"/>
    <property type="project" value="UniProtKB"/>
</dbReference>
<dbReference type="GO" id="GO:0036126">
    <property type="term" value="C:sperm flagellum"/>
    <property type="evidence" value="ECO:0000314"/>
    <property type="project" value="UniProtKB"/>
</dbReference>
<dbReference type="GO" id="GO:0030317">
    <property type="term" value="P:flagellated sperm motility"/>
    <property type="evidence" value="ECO:0000314"/>
    <property type="project" value="UniProtKB"/>
</dbReference>
<dbReference type="InterPro" id="IPR048256">
    <property type="entry name" value="Tektin-like"/>
</dbReference>
<dbReference type="InterPro" id="IPR000435">
    <property type="entry name" value="Tektins"/>
</dbReference>
<dbReference type="PANTHER" id="PTHR19960">
    <property type="entry name" value="TEKTIN"/>
    <property type="match status" value="1"/>
</dbReference>
<dbReference type="PANTHER" id="PTHR19960:SF23">
    <property type="entry name" value="TEKTIN-5"/>
    <property type="match status" value="1"/>
</dbReference>
<dbReference type="Pfam" id="PF03148">
    <property type="entry name" value="Tektin"/>
    <property type="match status" value="1"/>
</dbReference>
<dbReference type="PRINTS" id="PR00511">
    <property type="entry name" value="TEKTIN"/>
</dbReference>